<protein>
    <recommendedName>
        <fullName evidence="1">2-keto-3-deoxygluconate permease</fullName>
        <shortName evidence="1">KDG permease</shortName>
    </recommendedName>
</protein>
<dbReference type="EMBL" id="CP001396">
    <property type="protein sequence ID" value="ACR61769.1"/>
    <property type="molecule type" value="Genomic_DNA"/>
</dbReference>
<dbReference type="RefSeq" id="WP_001166063.1">
    <property type="nucleotide sequence ID" value="NC_012759.1"/>
</dbReference>
<dbReference type="GeneID" id="75204583"/>
<dbReference type="KEGG" id="ebw:BWG_3579"/>
<dbReference type="HOGENOM" id="CLU_057476_0_1_6"/>
<dbReference type="GO" id="GO:0005886">
    <property type="term" value="C:plasma membrane"/>
    <property type="evidence" value="ECO:0007669"/>
    <property type="project" value="UniProtKB-SubCell"/>
</dbReference>
<dbReference type="GO" id="GO:0015649">
    <property type="term" value="F:2-keto-3-deoxygluconate:proton symporter activity"/>
    <property type="evidence" value="ECO:0007669"/>
    <property type="project" value="UniProtKB-UniRule"/>
</dbReference>
<dbReference type="HAMAP" id="MF_00070">
    <property type="entry name" value="KdgT"/>
    <property type="match status" value="1"/>
</dbReference>
<dbReference type="InterPro" id="IPR004684">
    <property type="entry name" value="2keto-3dGluconate_permease"/>
</dbReference>
<dbReference type="InterPro" id="IPR018395">
    <property type="entry name" value="2keto-3dGluconate_permease_sub"/>
</dbReference>
<dbReference type="NCBIfam" id="TIGR00793">
    <property type="entry name" value="kdgT"/>
    <property type="match status" value="1"/>
</dbReference>
<dbReference type="Pfam" id="PF03812">
    <property type="entry name" value="KdgT"/>
    <property type="match status" value="1"/>
</dbReference>
<comment type="function">
    <text evidence="1">Catalyzes the proton-dependent uptake of 2-keto-3-deoxygluconate (KDG) into the cell.</text>
</comment>
<comment type="catalytic activity">
    <reaction evidence="1">
        <text>2-dehydro-3-deoxy-D-gluconate(in) + H(+)(in) = 2-dehydro-3-deoxy-D-gluconate(out) + H(+)(out)</text>
        <dbReference type="Rhea" id="RHEA:29943"/>
        <dbReference type="ChEBI" id="CHEBI:15378"/>
        <dbReference type="ChEBI" id="CHEBI:57990"/>
    </reaction>
    <physiologicalReaction direction="right-to-left" evidence="1">
        <dbReference type="Rhea" id="RHEA:29945"/>
    </physiologicalReaction>
</comment>
<comment type="subcellular location">
    <subcellularLocation>
        <location evidence="1">Cell inner membrane</location>
        <topology evidence="1">Multi-pass membrane protein</topology>
    </subcellularLocation>
</comment>
<comment type="similarity">
    <text evidence="1">Belongs to the KdgT transporter family.</text>
</comment>
<evidence type="ECO:0000255" key="1">
    <source>
        <dbReference type="HAMAP-Rule" id="MF_00070"/>
    </source>
</evidence>
<proteinExistence type="inferred from homology"/>
<accession>C5A077</accession>
<name>KDGT_ECOBW</name>
<keyword id="KW-0997">Cell inner membrane</keyword>
<keyword id="KW-1003">Cell membrane</keyword>
<keyword id="KW-0472">Membrane</keyword>
<keyword id="KW-0762">Sugar transport</keyword>
<keyword id="KW-0769">Symport</keyword>
<keyword id="KW-0812">Transmembrane</keyword>
<keyword id="KW-1133">Transmembrane helix</keyword>
<keyword id="KW-0813">Transport</keyword>
<organism>
    <name type="scientific">Escherichia coli (strain K12 / MC4100 / BW2952)</name>
    <dbReference type="NCBI Taxonomy" id="595496"/>
    <lineage>
        <taxon>Bacteria</taxon>
        <taxon>Pseudomonadati</taxon>
        <taxon>Pseudomonadota</taxon>
        <taxon>Gammaproteobacteria</taxon>
        <taxon>Enterobacterales</taxon>
        <taxon>Enterobacteriaceae</taxon>
        <taxon>Escherichia</taxon>
    </lineage>
</organism>
<gene>
    <name evidence="1" type="primary">kdgT</name>
    <name type="ordered locus">BWG_3579</name>
</gene>
<sequence>MQIKRSIEKIPGGMMLVPLFLGALCHTFSPGAGKYFGSFTNGMITGTVPILAVWFFCMGASIKLSATGTVLRKSGTLVVTKIAVAWVVAAIASRIIPEHGVEVGFFAGLSTLALVAAMDMTNGGLYASIMQQYGTKEEAGAFVLMSLESGPLMTMIILGTAGIASFEPHVFVGAVLPFLVGFALGNLDPELREFFSKAVQTLIPFFAFALGNTIDLTVIAQTGLLGILLGVAVIIVTGIPLIIADKLIGGGDGTAGIAASSSAGAAVATPVLIAEMVPAFKPMAPAATSLVATAVIVTSILVPILTSIWSRKVKARAAKIEILGTVK</sequence>
<feature type="chain" id="PRO_1000202441" description="2-keto-3-deoxygluconate permease">
    <location>
        <begin position="1"/>
        <end position="327"/>
    </location>
</feature>
<feature type="transmembrane region" description="Helical" evidence="1">
    <location>
        <begin position="10"/>
        <end position="30"/>
    </location>
</feature>
<feature type="transmembrane region" description="Helical" evidence="1">
    <location>
        <begin position="42"/>
        <end position="62"/>
    </location>
</feature>
<feature type="transmembrane region" description="Helical" evidence="1">
    <location>
        <begin position="73"/>
        <end position="93"/>
    </location>
</feature>
<feature type="transmembrane region" description="Helical" evidence="1">
    <location>
        <begin position="95"/>
        <end position="115"/>
    </location>
</feature>
<feature type="transmembrane region" description="Helical" evidence="1">
    <location>
        <begin position="139"/>
        <end position="159"/>
    </location>
</feature>
<feature type="transmembrane region" description="Helical" evidence="1">
    <location>
        <begin position="163"/>
        <end position="183"/>
    </location>
</feature>
<feature type="transmembrane region" description="Helical" evidence="1">
    <location>
        <begin position="199"/>
        <end position="219"/>
    </location>
</feature>
<feature type="transmembrane region" description="Helical" evidence="1">
    <location>
        <begin position="224"/>
        <end position="244"/>
    </location>
</feature>
<feature type="transmembrane region" description="Helical" evidence="1">
    <location>
        <begin position="254"/>
        <end position="274"/>
    </location>
</feature>
<feature type="transmembrane region" description="Helical" evidence="1">
    <location>
        <begin position="289"/>
        <end position="309"/>
    </location>
</feature>
<reference key="1">
    <citation type="journal article" date="2009" name="J. Bacteriol.">
        <title>Genomic sequencing reveals regulatory mutations and recombinational events in the widely used MC4100 lineage of Escherichia coli K-12.</title>
        <authorList>
            <person name="Ferenci T."/>
            <person name="Zhou Z."/>
            <person name="Betteridge T."/>
            <person name="Ren Y."/>
            <person name="Liu Y."/>
            <person name="Feng L."/>
            <person name="Reeves P.R."/>
            <person name="Wang L."/>
        </authorList>
    </citation>
    <scope>NUCLEOTIDE SEQUENCE [LARGE SCALE GENOMIC DNA]</scope>
    <source>
        <strain>K12 / MC4100 / BW2952</strain>
    </source>
</reference>